<dbReference type="EC" id="3.1.-.-" evidence="1"/>
<dbReference type="EMBL" id="AB126193">
    <property type="protein sequence ID" value="BAD24939.1"/>
    <property type="molecule type" value="Genomic_RNA"/>
</dbReference>
<dbReference type="RefSeq" id="YP_089654.1">
    <molecule id="Q6I7C2-1"/>
    <property type="nucleotide sequence ID" value="NC_006309.1"/>
</dbReference>
<dbReference type="SMR" id="Q6I7C2"/>
<dbReference type="DNASU" id="3077358"/>
<dbReference type="GeneID" id="3077358"/>
<dbReference type="KEGG" id="vg:3077358"/>
<dbReference type="OrthoDB" id="495at10239"/>
<dbReference type="Proteomes" id="UP000008286">
    <property type="component" value="Genome"/>
</dbReference>
<dbReference type="GO" id="GO:0030430">
    <property type="term" value="C:host cell cytoplasm"/>
    <property type="evidence" value="ECO:0007669"/>
    <property type="project" value="UniProtKB-SubCell"/>
</dbReference>
<dbReference type="GO" id="GO:0042025">
    <property type="term" value="C:host cell nucleus"/>
    <property type="evidence" value="ECO:0007669"/>
    <property type="project" value="UniProtKB-SubCell"/>
</dbReference>
<dbReference type="GO" id="GO:0004519">
    <property type="term" value="F:endonuclease activity"/>
    <property type="evidence" value="ECO:0007669"/>
    <property type="project" value="UniProtKB-KW"/>
</dbReference>
<dbReference type="GO" id="GO:0046872">
    <property type="term" value="F:metal ion binding"/>
    <property type="evidence" value="ECO:0007669"/>
    <property type="project" value="UniProtKB-KW"/>
</dbReference>
<dbReference type="GO" id="GO:0003723">
    <property type="term" value="F:RNA binding"/>
    <property type="evidence" value="ECO:0007669"/>
    <property type="project" value="UniProtKB-UniRule"/>
</dbReference>
<dbReference type="GO" id="GO:0075526">
    <property type="term" value="P:cap snatching"/>
    <property type="evidence" value="ECO:0007669"/>
    <property type="project" value="UniProtKB-UniRule"/>
</dbReference>
<dbReference type="GO" id="GO:0006351">
    <property type="term" value="P:DNA-templated transcription"/>
    <property type="evidence" value="ECO:0007669"/>
    <property type="project" value="UniProtKB-UniRule"/>
</dbReference>
<dbReference type="GO" id="GO:0039657">
    <property type="term" value="P:symbiont-mediated suppression of host gene expression"/>
    <property type="evidence" value="ECO:0007669"/>
    <property type="project" value="UniProtKB-KW"/>
</dbReference>
<dbReference type="GO" id="GO:0039523">
    <property type="term" value="P:symbiont-mediated suppression of host mRNA transcription via inhibition of RNA polymerase II activity"/>
    <property type="evidence" value="ECO:0007669"/>
    <property type="project" value="UniProtKB-UniRule"/>
</dbReference>
<dbReference type="GO" id="GO:0039694">
    <property type="term" value="P:viral RNA genome replication"/>
    <property type="evidence" value="ECO:0007669"/>
    <property type="project" value="InterPro"/>
</dbReference>
<dbReference type="GO" id="GO:0075523">
    <property type="term" value="P:viral translational frameshifting"/>
    <property type="evidence" value="ECO:0007669"/>
    <property type="project" value="UniProtKB-KW"/>
</dbReference>
<dbReference type="Gene3D" id="3.40.91.90">
    <property type="entry name" value="Influenza RNA-dependent RNA polymerase subunit PA, endonuclease domain"/>
    <property type="match status" value="1"/>
</dbReference>
<dbReference type="HAMAP" id="MF_04063">
    <property type="entry name" value="INFV_PA"/>
    <property type="match status" value="1"/>
</dbReference>
<dbReference type="InterPro" id="IPR037534">
    <property type="entry name" value="INFV_PA"/>
</dbReference>
<dbReference type="InterPro" id="IPR001009">
    <property type="entry name" value="PA/PA-X"/>
</dbReference>
<dbReference type="InterPro" id="IPR038372">
    <property type="entry name" value="PA/PA-X_sf"/>
</dbReference>
<dbReference type="Pfam" id="PF00603">
    <property type="entry name" value="Flu_PA"/>
    <property type="match status" value="1"/>
</dbReference>
<evidence type="ECO:0000255" key="1">
    <source>
        <dbReference type="HAMAP-Rule" id="MF_04063"/>
    </source>
</evidence>
<comment type="function">
    <text evidence="1">Plays an essential role in viral RNA transcription and replication by forming the heterotrimeric polymerase complex together with PB1 and PB2 subunits. The complex transcribes viral mRNAs by using a unique mechanism called cap-snatching. It consists in the hijacking and cleavage of host capped pre-mRNAs. These short capped RNAs are then used as primers for viral mRNAs. The PB2 subunit is responsible for the binding of the 5' cap of cellular pre-mRNAs which are subsequently cleaved after 10-13 nucleotides by the PA subunit that carries the endonuclease activity.</text>
</comment>
<comment type="cofactor">
    <cofactor evidence="1">
        <name>Mn(2+)</name>
        <dbReference type="ChEBI" id="CHEBI:29035"/>
    </cofactor>
    <text evidence="1">Binds 2 manganese ions per subunit.</text>
</comment>
<comment type="subunit">
    <text evidence="1">Influenza RNA polymerase is composed of three subunits: PB1, PB2 and PA. Interacts (via C-terminus) with PB1 (via N-terminus).</text>
</comment>
<comment type="subcellular location">
    <subcellularLocation>
        <location evidence="1">Host cytoplasm</location>
    </subcellularLocation>
    <subcellularLocation>
        <location evidence="1">Host nucleus</location>
    </subcellularLocation>
    <text evidence="1">PB1 and PA are transported in the host nucleus as a complex.</text>
</comment>
<comment type="alternative products">
    <event type="ribosomal frameshifting"/>
    <isoform>
        <id>Q6I7C2-1</id>
        <name>PA</name>
        <sequence type="displayed"/>
    </isoform>
    <isoform>
        <id>Q6I7C2-2</id>
        <name>PA-X</name>
        <sequence type="not described"/>
    </isoform>
</comment>
<comment type="PTM">
    <text evidence="1">Phosphorylated on serines and threonines by host kinases, including human casein kinase II.</text>
</comment>
<comment type="similarity">
    <text evidence="1">Belongs to the influenza viruses PA family.</text>
</comment>
<sequence>MSKTFAEIAEAFLEPEAVRIAKEAVEEYGDHERKIIQIGIHFQVCCMFCDEYLSTNGSDRFVLIEGRKRGTAVSLQNELCKSYDLEPLPFLCDIFDREEKQFVEIGITRKADDSYFQSKFGKLGNSCKIFVFSYDGRLDKNCEGPMEEQKLRIFSFLATAADFLRKENMFNEIFLPDNEETIIEMKKGKTFLKLRDESVPLPFQTYEQMKDYCEKFKGNPRELASKVSQMQSNIKLPIKHYEQNKFRQIRLPKGPMAPYTHKFLMEEAWMFTKISDPERSRAGEILIDFFKKGNLSAIRPKDKPLQGKYPIHYKNLWNQIKAAIADRTMVINENDHSEFLGGIGRASKKIPEVSLTQDVITTEGLKQSENKLPEPRSFPKWFNAEWMWAIKDSDLTGWVPMAEYPPADNELEDYAEHLNKTMEGVLQGTNCAREMGKCILTVGALMTECRLFPGKIKVVPIYARSKERKSMQEGLPVPSEMDCLFGICVKSKSHLNKDDGMYTIITFEFSIREPNLEKHQKYTVFEAGHTTVRMKKGESVIGREVPLYLYCRTTALSKIKNDWLSKARRCFITTMDTVETICLRESAKAEENLVEKTLNEKQMWIGKKNGELIAQPLREALRVQLVQQFYFCIYNDSQLEGFCNEQKKILMALEGDKKNKSSFGFNPEGLLEKIEECLINNPMCLFMAQRLNELVIEASKRGAKFFKID</sequence>
<proteinExistence type="inferred from homology"/>
<protein>
    <recommendedName>
        <fullName evidence="1">Polymerase acidic protein</fullName>
        <ecNumber evidence="1">3.1.-.-</ecNumber>
    </recommendedName>
    <alternativeName>
        <fullName evidence="1">RNA-directed RNA polymerase subunit P2</fullName>
    </alternativeName>
</protein>
<name>PA_INCAA</name>
<organismHost>
    <name type="scientific">Homo sapiens</name>
    <name type="common">Human</name>
    <dbReference type="NCBI Taxonomy" id="9606"/>
</organismHost>
<organismHost>
    <name type="scientific">Sus scrofa</name>
    <name type="common">Pig</name>
    <dbReference type="NCBI Taxonomy" id="9823"/>
</organismHost>
<accession>Q6I7C2</accession>
<gene>
    <name evidence="1" type="primary">PA</name>
    <name type="synonym">P3</name>
</gene>
<reference key="1">
    <citation type="journal article" date="2004" name="J. Gen. Virol.">
        <title>Identification of an amino acid residue on influenza C virus M1 protein responsible for formation of the cord-like structures of the virus.</title>
        <authorList>
            <person name="Muraki Y."/>
            <person name="Washioka H."/>
            <person name="Sugawara K."/>
            <person name="Matsuzaki Y."/>
            <person name="Takashita E."/>
            <person name="Hongo S."/>
        </authorList>
    </citation>
    <scope>NUCLEOTIDE SEQUENCE [GENOMIC RNA]</scope>
</reference>
<feature type="chain" id="PRO_0000269453" description="Polymerase acidic protein">
    <location>
        <begin position="1"/>
        <end position="709"/>
    </location>
</feature>
<feature type="short sequence motif" description="Nuclear localization signal 1 (NLS1)" evidence="1">
    <location>
        <begin position="109"/>
        <end position="124"/>
    </location>
</feature>
<feature type="short sequence motif" description="Nuclear localization signal 2 (NLS2)" evidence="1">
    <location>
        <begin position="166"/>
        <end position="228"/>
    </location>
</feature>
<feature type="binding site" evidence="1">
    <location>
        <position position="41"/>
    </location>
    <ligand>
        <name>Mn(2+)</name>
        <dbReference type="ChEBI" id="CHEBI:29035"/>
        <label>1</label>
    </ligand>
</feature>
<feature type="binding site" evidence="1">
    <location>
        <position position="65"/>
    </location>
    <ligand>
        <name>Mn(2+)</name>
        <dbReference type="ChEBI" id="CHEBI:29035"/>
        <label>2</label>
    </ligand>
</feature>
<feature type="binding site" evidence="1">
    <location>
        <position position="93"/>
    </location>
    <ligand>
        <name>Mn(2+)</name>
        <dbReference type="ChEBI" id="CHEBI:29035"/>
        <label>1</label>
    </ligand>
</feature>
<feature type="binding site" evidence="1">
    <location>
        <position position="93"/>
    </location>
    <ligand>
        <name>Mn(2+)</name>
        <dbReference type="ChEBI" id="CHEBI:29035"/>
        <label>2</label>
    </ligand>
</feature>
<feature type="binding site" evidence="1">
    <location>
        <position position="104"/>
    </location>
    <ligand>
        <name>Mn(2+)</name>
        <dbReference type="ChEBI" id="CHEBI:29035"/>
        <label>1</label>
    </ligand>
</feature>
<feature type="binding site" evidence="1">
    <location>
        <position position="105"/>
    </location>
    <ligand>
        <name>Mn(2+)</name>
        <dbReference type="ChEBI" id="CHEBI:29035"/>
        <label>1</label>
    </ligand>
</feature>
<organism>
    <name type="scientific">Influenza C virus (strain C/Ann Arbor/1/1950)</name>
    <dbReference type="NCBI Taxonomy" id="11553"/>
    <lineage>
        <taxon>Viruses</taxon>
        <taxon>Riboviria</taxon>
        <taxon>Orthornavirae</taxon>
        <taxon>Negarnaviricota</taxon>
        <taxon>Polyploviricotina</taxon>
        <taxon>Insthoviricetes</taxon>
        <taxon>Articulavirales</taxon>
        <taxon>Orthomyxoviridae</taxon>
        <taxon>Gammainfluenzavirus</taxon>
        <taxon>Gammainfluenzavirus influenzae</taxon>
        <taxon>Influenza C virus</taxon>
    </lineage>
</organism>
<keyword id="KW-1157">Cap snatching</keyword>
<keyword id="KW-0255">Endonuclease</keyword>
<keyword id="KW-1262">Eukaryotic host gene expression shutoff by virus</keyword>
<keyword id="KW-1191">Eukaryotic host transcription shutoff by virus</keyword>
<keyword id="KW-1035">Host cytoplasm</keyword>
<keyword id="KW-1190">Host gene expression shutoff by virus</keyword>
<keyword id="KW-1048">Host nucleus</keyword>
<keyword id="KW-0945">Host-virus interaction</keyword>
<keyword id="KW-0378">Hydrolase</keyword>
<keyword id="KW-1104">Inhibition of host RNA polymerase II by virus</keyword>
<keyword id="KW-0464">Manganese</keyword>
<keyword id="KW-0479">Metal-binding</keyword>
<keyword id="KW-0540">Nuclease</keyword>
<keyword id="KW-0597">Phosphoprotein</keyword>
<keyword id="KW-1185">Reference proteome</keyword>
<keyword id="KW-0688">Ribosomal frameshifting</keyword>